<dbReference type="EC" id="5.2.1.8"/>
<dbReference type="EMBL" id="L28082">
    <property type="protein sequence ID" value="AAC41459.1"/>
    <property type="molecule type" value="Genomic_DNA"/>
</dbReference>
<dbReference type="EMBL" id="U18997">
    <property type="protein sequence ID" value="AAA58144.1"/>
    <property type="molecule type" value="Genomic_DNA"/>
</dbReference>
<dbReference type="EMBL" id="U00096">
    <property type="protein sequence ID" value="AAC76372.1"/>
    <property type="molecule type" value="Genomic_DNA"/>
</dbReference>
<dbReference type="EMBL" id="AP009048">
    <property type="protein sequence ID" value="BAE77944.1"/>
    <property type="molecule type" value="Genomic_DNA"/>
</dbReference>
<dbReference type="PIR" id="I65035">
    <property type="entry name" value="I65035"/>
</dbReference>
<dbReference type="RefSeq" id="NP_417806.1">
    <property type="nucleotide sequence ID" value="NC_000913.3"/>
</dbReference>
<dbReference type="RefSeq" id="WP_000838250.1">
    <property type="nucleotide sequence ID" value="NZ_SSZK01000008.1"/>
</dbReference>
<dbReference type="PDB" id="1Q6H">
    <property type="method" value="X-ray"/>
    <property type="resolution" value="1.97 A"/>
    <property type="chains" value="A/B=26-249"/>
</dbReference>
<dbReference type="PDB" id="1Q6I">
    <property type="method" value="X-ray"/>
    <property type="resolution" value="2.25 A"/>
    <property type="chains" value="A/B=26-249"/>
</dbReference>
<dbReference type="PDB" id="1Q6U">
    <property type="method" value="X-ray"/>
    <property type="resolution" value="2.45 A"/>
    <property type="chains" value="A=26-270"/>
</dbReference>
<dbReference type="PDB" id="4QCC">
    <property type="method" value="X-ray"/>
    <property type="resolution" value="7.08 A"/>
    <property type="chains" value="A/B=45-116"/>
</dbReference>
<dbReference type="PDBsum" id="1Q6H"/>
<dbReference type="PDBsum" id="1Q6I"/>
<dbReference type="PDBsum" id="1Q6U"/>
<dbReference type="PDBsum" id="4QCC"/>
<dbReference type="BMRB" id="P45523"/>
<dbReference type="SMR" id="P45523"/>
<dbReference type="BioGRID" id="4263165">
    <property type="interactions" value="69"/>
</dbReference>
<dbReference type="BioGRID" id="852161">
    <property type="interactions" value="1"/>
</dbReference>
<dbReference type="DIP" id="DIP-9625N"/>
<dbReference type="FunCoup" id="P45523">
    <property type="interactions" value="420"/>
</dbReference>
<dbReference type="IntAct" id="P45523">
    <property type="interactions" value="17"/>
</dbReference>
<dbReference type="MINT" id="P45523"/>
<dbReference type="STRING" id="511145.b3347"/>
<dbReference type="jPOST" id="P45523"/>
<dbReference type="PaxDb" id="511145-b3347"/>
<dbReference type="EnsemblBacteria" id="AAC76372">
    <property type="protein sequence ID" value="AAC76372"/>
    <property type="gene ID" value="b3347"/>
</dbReference>
<dbReference type="GeneID" id="947850"/>
<dbReference type="KEGG" id="ecj:JW3309"/>
<dbReference type="KEGG" id="eco:b3347"/>
<dbReference type="KEGG" id="ecoc:C3026_18175"/>
<dbReference type="PATRIC" id="fig|1411691.4.peg.3384"/>
<dbReference type="EchoBASE" id="EB2737"/>
<dbReference type="eggNOG" id="COG0545">
    <property type="taxonomic scope" value="Bacteria"/>
</dbReference>
<dbReference type="HOGENOM" id="CLU_013615_0_2_6"/>
<dbReference type="InParanoid" id="P45523"/>
<dbReference type="OMA" id="PAEFKLN"/>
<dbReference type="OrthoDB" id="9814548at2"/>
<dbReference type="PhylomeDB" id="P45523"/>
<dbReference type="BioCyc" id="EcoCyc:G7716-MONOMER"/>
<dbReference type="BRENDA" id="5.2.1.8">
    <property type="organism ID" value="2026"/>
</dbReference>
<dbReference type="EvolutionaryTrace" id="P45523"/>
<dbReference type="PRO" id="PR:P45523"/>
<dbReference type="Proteomes" id="UP000000625">
    <property type="component" value="Chromosome"/>
</dbReference>
<dbReference type="GO" id="GO:0030288">
    <property type="term" value="C:outer membrane-bounded periplasmic space"/>
    <property type="evidence" value="ECO:0000314"/>
    <property type="project" value="EcoCyc"/>
</dbReference>
<dbReference type="GO" id="GO:0003755">
    <property type="term" value="F:peptidyl-prolyl cis-trans isomerase activity"/>
    <property type="evidence" value="ECO:0000314"/>
    <property type="project" value="CACAO"/>
</dbReference>
<dbReference type="GO" id="GO:0044183">
    <property type="term" value="F:protein folding chaperone"/>
    <property type="evidence" value="ECO:0000269"/>
    <property type="project" value="DisProt"/>
</dbReference>
<dbReference type="GO" id="GO:0042026">
    <property type="term" value="P:protein refolding"/>
    <property type="evidence" value="ECO:0000314"/>
    <property type="project" value="EcoliWiki"/>
</dbReference>
<dbReference type="DisProt" id="DP02787"/>
<dbReference type="FunFam" id="1.10.287.460:FF:000002">
    <property type="entry name" value="Peptidyl-prolyl cis-trans isomerase"/>
    <property type="match status" value="1"/>
</dbReference>
<dbReference type="FunFam" id="3.10.50.40:FF:000004">
    <property type="entry name" value="Peptidyl-prolyl cis-trans isomerase"/>
    <property type="match status" value="1"/>
</dbReference>
<dbReference type="Gene3D" id="3.10.50.40">
    <property type="match status" value="1"/>
</dbReference>
<dbReference type="Gene3D" id="1.10.287.460">
    <property type="entry name" value="Peptidyl-prolyl cis-trans isomerase, FKBP-type, N-terminal domain"/>
    <property type="match status" value="1"/>
</dbReference>
<dbReference type="InterPro" id="IPR046357">
    <property type="entry name" value="PPIase_dom_sf"/>
</dbReference>
<dbReference type="InterPro" id="IPR001179">
    <property type="entry name" value="PPIase_FKBP_dom"/>
</dbReference>
<dbReference type="InterPro" id="IPR000774">
    <property type="entry name" value="PPIase_FKBP_N"/>
</dbReference>
<dbReference type="InterPro" id="IPR036944">
    <property type="entry name" value="PPIase_FKBP_N_sf"/>
</dbReference>
<dbReference type="NCBIfam" id="NF008150">
    <property type="entry name" value="PRK10902.1"/>
    <property type="match status" value="1"/>
</dbReference>
<dbReference type="PANTHER" id="PTHR43811:SF19">
    <property type="entry name" value="39 KDA FK506-BINDING NUCLEAR PROTEIN"/>
    <property type="match status" value="1"/>
</dbReference>
<dbReference type="PANTHER" id="PTHR43811">
    <property type="entry name" value="FKBP-TYPE PEPTIDYL-PROLYL CIS-TRANS ISOMERASE FKPA"/>
    <property type="match status" value="1"/>
</dbReference>
<dbReference type="Pfam" id="PF00254">
    <property type="entry name" value="FKBP_C"/>
    <property type="match status" value="1"/>
</dbReference>
<dbReference type="Pfam" id="PF01346">
    <property type="entry name" value="FKBP_N"/>
    <property type="match status" value="1"/>
</dbReference>
<dbReference type="SUPFAM" id="SSF54534">
    <property type="entry name" value="FKBP-like"/>
    <property type="match status" value="1"/>
</dbReference>
<dbReference type="PROSITE" id="PS50059">
    <property type="entry name" value="FKBP_PPIASE"/>
    <property type="match status" value="1"/>
</dbReference>
<name>FKBA_ECOLI</name>
<protein>
    <recommendedName>
        <fullName>FKBP-type peptidyl-prolyl cis-trans isomerase FkpA</fullName>
        <shortName>PPIase</shortName>
        <ecNumber>5.2.1.8</ecNumber>
    </recommendedName>
    <alternativeName>
        <fullName>Rotamase</fullName>
    </alternativeName>
</protein>
<accession>P45523</accession>
<accession>P39175</accession>
<accession>Q2M712</accession>
<reference key="1">
    <citation type="journal article" date="1995" name="Arch. Microbiol.">
        <title>Escherichia coli and other species of the Enterobacteriaceae encode a protein similar to the family of Mip-like FK506-binding proteins.</title>
        <authorList>
            <person name="Horne S.M."/>
            <person name="Young K.D."/>
        </authorList>
    </citation>
    <scope>NUCLEOTIDE SEQUENCE [GENOMIC DNA]</scope>
    <source>
        <strain>K12 / CS109</strain>
    </source>
</reference>
<reference key="2">
    <citation type="journal article" date="1997" name="Science">
        <title>The complete genome sequence of Escherichia coli K-12.</title>
        <authorList>
            <person name="Blattner F.R."/>
            <person name="Plunkett G. III"/>
            <person name="Bloch C.A."/>
            <person name="Perna N.T."/>
            <person name="Burland V."/>
            <person name="Riley M."/>
            <person name="Collado-Vides J."/>
            <person name="Glasner J.D."/>
            <person name="Rode C.K."/>
            <person name="Mayhew G.F."/>
            <person name="Gregor J."/>
            <person name="Davis N.W."/>
            <person name="Kirkpatrick H.A."/>
            <person name="Goeden M.A."/>
            <person name="Rose D.J."/>
            <person name="Mau B."/>
            <person name="Shao Y."/>
        </authorList>
    </citation>
    <scope>NUCLEOTIDE SEQUENCE [LARGE SCALE GENOMIC DNA]</scope>
    <source>
        <strain>K12 / MG1655 / ATCC 47076</strain>
    </source>
</reference>
<reference key="3">
    <citation type="journal article" date="2006" name="Mol. Syst. Biol.">
        <title>Highly accurate genome sequences of Escherichia coli K-12 strains MG1655 and W3110.</title>
        <authorList>
            <person name="Hayashi K."/>
            <person name="Morooka N."/>
            <person name="Yamamoto Y."/>
            <person name="Fujita K."/>
            <person name="Isono K."/>
            <person name="Choi S."/>
            <person name="Ohtsubo E."/>
            <person name="Baba T."/>
            <person name="Wanner B.L."/>
            <person name="Mori H."/>
            <person name="Horiuchi T."/>
        </authorList>
    </citation>
    <scope>NUCLEOTIDE SEQUENCE [LARGE SCALE GENOMIC DNA]</scope>
    <source>
        <strain>K12 / W3110 / ATCC 27325 / DSM 5911</strain>
    </source>
</reference>
<reference key="4">
    <citation type="journal article" date="1997" name="Electrophoresis">
        <title>Comparing the predicted and observed properties of proteins encoded in the genome of Escherichia coli K-12.</title>
        <authorList>
            <person name="Link A.J."/>
            <person name="Robison K."/>
            <person name="Church G.M."/>
        </authorList>
    </citation>
    <scope>PROTEIN SEQUENCE OF 26-37</scope>
    <source>
        <strain>K12 / EMG2</strain>
    </source>
</reference>
<reference key="5">
    <citation type="journal article" date="1996" name="Mol. Microbiol.">
        <title>New components of protein folding in extracytoplasmic compartments of Escherichia coli SurA, FkpA and Skp/OmpH.</title>
        <authorList>
            <person name="Missiakas D."/>
            <person name="Betton J.-M."/>
            <person name="Raina S."/>
        </authorList>
    </citation>
    <scope>CHARACTERIZATION</scope>
</reference>
<organism>
    <name type="scientific">Escherichia coli (strain K12)</name>
    <dbReference type="NCBI Taxonomy" id="83333"/>
    <lineage>
        <taxon>Bacteria</taxon>
        <taxon>Pseudomonadati</taxon>
        <taxon>Pseudomonadota</taxon>
        <taxon>Gammaproteobacteria</taxon>
        <taxon>Enterobacterales</taxon>
        <taxon>Enterobacteriaceae</taxon>
        <taxon>Escherichia</taxon>
    </lineage>
</organism>
<evidence type="ECO:0000255" key="1">
    <source>
        <dbReference type="PROSITE-ProRule" id="PRU00277"/>
    </source>
</evidence>
<evidence type="ECO:0000269" key="2">
    <source>
    </source>
</evidence>
<evidence type="ECO:0000305" key="3"/>
<evidence type="ECO:0007829" key="4">
    <source>
        <dbReference type="PDB" id="1Q6H"/>
    </source>
</evidence>
<feature type="signal peptide" evidence="2">
    <location>
        <begin position="1"/>
        <end position="25"/>
    </location>
</feature>
<feature type="chain" id="PRO_0000025536" description="FKBP-type peptidyl-prolyl cis-trans isomerase FkpA">
    <location>
        <begin position="26"/>
        <end position="270"/>
    </location>
</feature>
<feature type="domain" description="PPIase FKBP-type" evidence="1">
    <location>
        <begin position="164"/>
        <end position="249"/>
    </location>
</feature>
<feature type="helix" evidence="4">
    <location>
        <begin position="44"/>
        <end position="68"/>
    </location>
</feature>
<feature type="turn" evidence="4">
    <location>
        <begin position="69"/>
        <end position="71"/>
    </location>
</feature>
<feature type="helix" evidence="4">
    <location>
        <begin position="76"/>
        <end position="87"/>
    </location>
</feature>
<feature type="helix" evidence="4">
    <location>
        <begin position="95"/>
        <end position="137"/>
    </location>
</feature>
<feature type="strand" evidence="4">
    <location>
        <begin position="141"/>
        <end position="143"/>
    </location>
</feature>
<feature type="strand" evidence="4">
    <location>
        <begin position="149"/>
        <end position="154"/>
    </location>
</feature>
<feature type="strand" evidence="4">
    <location>
        <begin position="166"/>
        <end position="175"/>
    </location>
</feature>
<feature type="strand" evidence="4">
    <location>
        <begin position="180"/>
        <end position="183"/>
    </location>
</feature>
<feature type="helix" evidence="4">
    <location>
        <begin position="184"/>
        <end position="187"/>
    </location>
</feature>
<feature type="strand" evidence="4">
    <location>
        <begin position="191"/>
        <end position="194"/>
    </location>
</feature>
<feature type="helix" evidence="4">
    <location>
        <begin position="195"/>
        <end position="197"/>
    </location>
</feature>
<feature type="helix" evidence="4">
    <location>
        <begin position="200"/>
        <end position="205"/>
    </location>
</feature>
<feature type="helix" evidence="4">
    <location>
        <begin position="206"/>
        <end position="208"/>
    </location>
</feature>
<feature type="strand" evidence="4">
    <location>
        <begin position="214"/>
        <end position="219"/>
    </location>
</feature>
<feature type="helix" evidence="4">
    <location>
        <begin position="221"/>
        <end position="223"/>
    </location>
</feature>
<feature type="turn" evidence="4">
    <location>
        <begin position="224"/>
        <end position="228"/>
    </location>
</feature>
<feature type="strand" evidence="4">
    <location>
        <begin position="239"/>
        <end position="249"/>
    </location>
</feature>
<comment type="function">
    <text>PPIases accelerate the folding of proteins. It catalyzes the cis-trans isomerization of proline imidic peptide bonds in oligopeptides.</text>
</comment>
<comment type="catalytic activity">
    <reaction>
        <text>[protein]-peptidylproline (omega=180) = [protein]-peptidylproline (omega=0)</text>
        <dbReference type="Rhea" id="RHEA:16237"/>
        <dbReference type="Rhea" id="RHEA-COMP:10747"/>
        <dbReference type="Rhea" id="RHEA-COMP:10748"/>
        <dbReference type="ChEBI" id="CHEBI:83833"/>
        <dbReference type="ChEBI" id="CHEBI:83834"/>
        <dbReference type="EC" id="5.2.1.8"/>
    </reaction>
</comment>
<comment type="subcellular location">
    <subcellularLocation>
        <location>Periplasm</location>
    </subcellularLocation>
</comment>
<comment type="similarity">
    <text evidence="3">Belongs to the FKBP-type PPIase family.</text>
</comment>
<keyword id="KW-0002">3D-structure</keyword>
<keyword id="KW-0903">Direct protein sequencing</keyword>
<keyword id="KW-0413">Isomerase</keyword>
<keyword id="KW-0574">Periplasm</keyword>
<keyword id="KW-1185">Reference proteome</keyword>
<keyword id="KW-0697">Rotamase</keyword>
<keyword id="KW-0732">Signal</keyword>
<sequence>MKSLFKVTLLATTMAVALHAPITFAAEAAKPATAADSKAAFKNDDQKSAYALGASLGRYMENSLKEQEKLGIKLDKDQLIAGVQDAFADKSKLSDQEIEQTLQAFEARVKSSAQAKMEKDAADNEAKGKEYREKFAKEKGVKTSSTGLVYQVVEAGKGEAPKDSDTVVVNYKGTLIDGKEFDNSYTRGEPLSFRLDGVIPGWTEGLKNIKKGGKIKLVIPPELAYGKAGVPGIPPNSTLVFDVELLDVKPAPKADAKPEADAKAADSAKK</sequence>
<gene>
    <name type="primary">fkpA</name>
    <name type="synonym">yzzS</name>
    <name type="ordered locus">b3347</name>
    <name type="ordered locus">JW3309</name>
</gene>
<proteinExistence type="evidence at protein level"/>